<gene>
    <name type="primary">Pmfbp1</name>
    <name type="synonym">Stap</name>
</gene>
<organism>
    <name type="scientific">Mus musculus</name>
    <name type="common">Mouse</name>
    <dbReference type="NCBI Taxonomy" id="10090"/>
    <lineage>
        <taxon>Eukaryota</taxon>
        <taxon>Metazoa</taxon>
        <taxon>Chordata</taxon>
        <taxon>Craniata</taxon>
        <taxon>Vertebrata</taxon>
        <taxon>Euteleostomi</taxon>
        <taxon>Mammalia</taxon>
        <taxon>Eutheria</taxon>
        <taxon>Euarchontoglires</taxon>
        <taxon>Glires</taxon>
        <taxon>Rodentia</taxon>
        <taxon>Myomorpha</taxon>
        <taxon>Muroidea</taxon>
        <taxon>Muridae</taxon>
        <taxon>Murinae</taxon>
        <taxon>Mus</taxon>
        <taxon>Mus</taxon>
    </lineage>
</organism>
<reference key="1">
    <citation type="journal article" date="2001" name="Mol. Reprod. Dev.">
        <title>Characterization of a novel gene, sperm-tail-associated protein (Stap), in mouse post-meiotic testicular germ cells.</title>
        <authorList>
            <person name="Ohuchi J."/>
            <person name="Arai T."/>
            <person name="Kon Y."/>
            <person name="Asano A."/>
            <person name="Yamauchi H."/>
            <person name="Watanabe T."/>
        </authorList>
    </citation>
    <scope>NUCLEOTIDE SEQUENCE [MRNA]</scope>
    <scope>FUNCTION</scope>
    <scope>TISSUE SPECIFICITY</scope>
    <scope>SUBCELLULAR LOCATION</scope>
    <source>
        <tissue>Testis</tissue>
    </source>
</reference>
<reference key="2">
    <citation type="journal article" date="2018" name="Am. J. Hum. Genet.">
        <title>Mutations in PMFBP1 cause acephalic spermatozoa syndrome.</title>
        <authorList>
            <person name="Zhu F."/>
            <person name="Liu C."/>
            <person name="Wang F."/>
            <person name="Yang X."/>
            <person name="Zhang J."/>
            <person name="Wu H."/>
            <person name="Zhang Z."/>
            <person name="He X."/>
            <person name="Zhang Z."/>
            <person name="Zhou P."/>
            <person name="Wei Z."/>
            <person name="Shang Y."/>
            <person name="Wang L."/>
            <person name="Zhang R."/>
            <person name="Ouyang Y.C."/>
            <person name="Sun Q.Y."/>
            <person name="Cao Y."/>
            <person name="Li W."/>
        </authorList>
    </citation>
    <scope>FUNCTION</scope>
    <scope>DISRUPTION PHENOTYPE</scope>
    <scope>TISSUE SPECIFICITY</scope>
    <scope>SUBCELLULAR LOCATION</scope>
</reference>
<reference key="3">
    <citation type="journal article" date="2019" name="Clin. Genet.">
        <title>Biallelic mutations in PMFBP1 cause acephalic spermatozoa.</title>
        <authorList>
            <person name="Sha Y.W."/>
            <person name="Wang X."/>
            <person name="Xu X."/>
            <person name="Ding L."/>
            <person name="Liu W.S."/>
            <person name="Li P."/>
            <person name="Su Z.Y."/>
            <person name="Chen J."/>
            <person name="Mei L.B."/>
            <person name="Zheng L.K."/>
            <person name="Wang H.L."/>
            <person name="Kong S.B."/>
            <person name="You M."/>
            <person name="Wu J.F."/>
        </authorList>
    </citation>
    <scope>FUNCTION</scope>
    <scope>DISRUPTION PHENOTYPE</scope>
    <scope>SUBCELLULAR LOCATION</scope>
</reference>
<dbReference type="EMBL" id="AB029919">
    <property type="protein sequence ID" value="BAA82514.1"/>
    <property type="molecule type" value="mRNA"/>
</dbReference>
<dbReference type="CCDS" id="CCDS40468.1"/>
<dbReference type="RefSeq" id="NP_064322.1">
    <property type="nucleotide sequence ID" value="NM_019938.3"/>
</dbReference>
<dbReference type="RefSeq" id="XP_006531277.1">
    <property type="nucleotide sequence ID" value="XM_006531214.4"/>
</dbReference>
<dbReference type="SMR" id="Q9WVQ0"/>
<dbReference type="FunCoup" id="Q9WVQ0">
    <property type="interactions" value="19"/>
</dbReference>
<dbReference type="IntAct" id="Q9WVQ0">
    <property type="interactions" value="1"/>
</dbReference>
<dbReference type="MINT" id="Q9WVQ0"/>
<dbReference type="STRING" id="10090.ENSMUSP00000034162"/>
<dbReference type="iPTMnet" id="Q9WVQ0"/>
<dbReference type="PhosphoSitePlus" id="Q9WVQ0"/>
<dbReference type="jPOST" id="Q9WVQ0"/>
<dbReference type="PaxDb" id="10090-ENSMUSP00000034162"/>
<dbReference type="ProteomicsDB" id="289550"/>
<dbReference type="Antibodypedia" id="1776">
    <property type="antibodies" value="94 antibodies from 19 providers"/>
</dbReference>
<dbReference type="DNASU" id="56523"/>
<dbReference type="Ensembl" id="ENSMUST00000034162.8">
    <property type="protein sequence ID" value="ENSMUSP00000034162.7"/>
    <property type="gene ID" value="ENSMUSG00000031727.9"/>
</dbReference>
<dbReference type="GeneID" id="56523"/>
<dbReference type="KEGG" id="mmu:56523"/>
<dbReference type="UCSC" id="uc009nii.2">
    <property type="organism name" value="mouse"/>
</dbReference>
<dbReference type="AGR" id="MGI:1930136"/>
<dbReference type="CTD" id="83449"/>
<dbReference type="MGI" id="MGI:1930136">
    <property type="gene designation" value="Pmfbp1"/>
</dbReference>
<dbReference type="VEuPathDB" id="HostDB:ENSMUSG00000031727"/>
<dbReference type="eggNOG" id="ENOG502QUDT">
    <property type="taxonomic scope" value="Eukaryota"/>
</dbReference>
<dbReference type="GeneTree" id="ENSGT00390000012700"/>
<dbReference type="HOGENOM" id="CLU_012841_0_0_1"/>
<dbReference type="InParanoid" id="Q9WVQ0"/>
<dbReference type="OMA" id="SKYNASQ"/>
<dbReference type="OrthoDB" id="6350415at2759"/>
<dbReference type="PhylomeDB" id="Q9WVQ0"/>
<dbReference type="TreeFam" id="TF336266"/>
<dbReference type="BioGRID-ORCS" id="56523">
    <property type="hits" value="1 hit in 79 CRISPR screens"/>
</dbReference>
<dbReference type="ChiTaRS" id="Pmfbp1">
    <property type="organism name" value="mouse"/>
</dbReference>
<dbReference type="PRO" id="PR:Q9WVQ0"/>
<dbReference type="Proteomes" id="UP000000589">
    <property type="component" value="Chromosome 8"/>
</dbReference>
<dbReference type="RNAct" id="Q9WVQ0">
    <property type="molecule type" value="protein"/>
</dbReference>
<dbReference type="Bgee" id="ENSMUSG00000031727">
    <property type="expression patterns" value="Expressed in seminiferous tubule of testis and 31 other cell types or tissues"/>
</dbReference>
<dbReference type="ExpressionAtlas" id="Q9WVQ0">
    <property type="expression patterns" value="baseline and differential"/>
</dbReference>
<dbReference type="GO" id="GO:0005737">
    <property type="term" value="C:cytoplasm"/>
    <property type="evidence" value="ECO:0000314"/>
    <property type="project" value="MGI"/>
</dbReference>
<dbReference type="GO" id="GO:0036126">
    <property type="term" value="C:sperm flagellum"/>
    <property type="evidence" value="ECO:0000314"/>
    <property type="project" value="MGI"/>
</dbReference>
<dbReference type="GO" id="GO:0061827">
    <property type="term" value="C:sperm head"/>
    <property type="evidence" value="ECO:0000314"/>
    <property type="project" value="MGI"/>
</dbReference>
<dbReference type="GO" id="GO:0120212">
    <property type="term" value="C:sperm head-tail coupling apparatus"/>
    <property type="evidence" value="ECO:0000314"/>
    <property type="project" value="UniProtKB"/>
</dbReference>
<dbReference type="GO" id="GO:0010467">
    <property type="term" value="P:gene expression"/>
    <property type="evidence" value="ECO:0000315"/>
    <property type="project" value="MGI"/>
</dbReference>
<dbReference type="GO" id="GO:0008104">
    <property type="term" value="P:protein localization"/>
    <property type="evidence" value="ECO:0000315"/>
    <property type="project" value="MGI"/>
</dbReference>
<dbReference type="GO" id="GO:0065003">
    <property type="term" value="P:protein-containing complex assembly"/>
    <property type="evidence" value="ECO:0000315"/>
    <property type="project" value="MGI"/>
</dbReference>
<dbReference type="GO" id="GO:0032880">
    <property type="term" value="P:regulation of protein localization"/>
    <property type="evidence" value="ECO:0000315"/>
    <property type="project" value="MGI"/>
</dbReference>
<dbReference type="GO" id="GO:0007286">
    <property type="term" value="P:spermatid development"/>
    <property type="evidence" value="ECO:0000315"/>
    <property type="project" value="MGI"/>
</dbReference>
<dbReference type="GO" id="GO:0007283">
    <property type="term" value="P:spermatogenesis"/>
    <property type="evidence" value="ECO:0000315"/>
    <property type="project" value="UniProtKB"/>
</dbReference>
<dbReference type="InterPro" id="IPR037391">
    <property type="entry name" value="PMF1-bd"/>
</dbReference>
<dbReference type="PANTHER" id="PTHR18881:SF2">
    <property type="entry name" value="POLYAMINE-MODULATED FACTOR 1-BINDING PROTEIN 1"/>
    <property type="match status" value="1"/>
</dbReference>
<dbReference type="PANTHER" id="PTHR18881">
    <property type="entry name" value="POLYAMINE-MODULATED FACTOR 1-BINDING PROTEIN 1-RELATED"/>
    <property type="match status" value="1"/>
</dbReference>
<dbReference type="SUPFAM" id="SSF56399">
    <property type="entry name" value="ADP-ribosylation"/>
    <property type="match status" value="1"/>
</dbReference>
<feature type="chain" id="PRO_0000304620" description="Polyamine-modulated factor 1-binding protein 1">
    <location>
        <begin position="1"/>
        <end position="1022"/>
    </location>
</feature>
<feature type="region of interest" description="Disordered" evidence="2">
    <location>
        <begin position="545"/>
        <end position="582"/>
    </location>
</feature>
<feature type="coiled-coil region" evidence="1">
    <location>
        <begin position="89"/>
        <end position="121"/>
    </location>
</feature>
<feature type="coiled-coil region" evidence="1">
    <location>
        <begin position="169"/>
        <end position="281"/>
    </location>
</feature>
<feature type="coiled-coil region" evidence="1">
    <location>
        <begin position="312"/>
        <end position="377"/>
    </location>
</feature>
<feature type="coiled-coil region" evidence="1">
    <location>
        <begin position="411"/>
        <end position="732"/>
    </location>
</feature>
<feature type="coiled-coil region" evidence="1">
    <location>
        <begin position="758"/>
        <end position="968"/>
    </location>
</feature>
<feature type="compositionally biased region" description="Basic and acidic residues" evidence="2">
    <location>
        <begin position="545"/>
        <end position="556"/>
    </location>
</feature>
<feature type="compositionally biased region" description="Basic and acidic residues" evidence="2">
    <location>
        <begin position="571"/>
        <end position="582"/>
    </location>
</feature>
<keyword id="KW-0966">Cell projection</keyword>
<keyword id="KW-0969">Cilium</keyword>
<keyword id="KW-0175">Coiled coil</keyword>
<keyword id="KW-0282">Flagellum</keyword>
<keyword id="KW-1185">Reference proteome</keyword>
<evidence type="ECO:0000255" key="1"/>
<evidence type="ECO:0000256" key="2">
    <source>
        <dbReference type="SAM" id="MobiDB-lite"/>
    </source>
</evidence>
<evidence type="ECO:0000269" key="3">
    <source>
    </source>
</evidence>
<evidence type="ECO:0000269" key="4">
    <source>
    </source>
</evidence>
<evidence type="ECO:0000269" key="5">
    <source>
    </source>
</evidence>
<comment type="function">
    <text evidence="3 4 5">Required for normal spermatogenesis (PubMed:30032984, PubMed:30298696). It functions as a scaffold protein that attaches the sperm head-tail connecting piece to the nuclear envelope, thus maintaining sperm head and tail integrity (PubMed:30032984). May also be involved in the general organization of cellular cytoskeleton.</text>
</comment>
<comment type="subcellular location">
    <subcellularLocation>
        <location evidence="3 4 5">Cell projection</location>
        <location evidence="3 4 5">Cilium</location>
        <location evidence="3 4 5">Flagellum</location>
    </subcellularLocation>
    <text evidence="4 5">Localized at the sperm head-tail connecting piece (PubMed:30032984, PubMed:30298696). During spermatogenesis, it is first observed in the cytoplasm of round spermatids, it later appears in the implantation fossa region of the sperm nucleus during sperm head elongation and differentiation, and finally it localizes to the head-tail connecting piece (PubMed:30032984).</text>
</comment>
<comment type="tissue specificity">
    <text evidence="3 4">Expressed in the testis.</text>
</comment>
<comment type="disruption phenotype">
    <text evidence="4 5">Knockout male mice are infertile and have acephalic spermatozoa, while females are fertile and show normal follicle development.</text>
</comment>
<proteinExistence type="evidence at transcript level"/>
<sequence>MLKLKGELRTAKGLKNEAGERDRDVSNLNSKLLSLQLDIKNLHDVCKRQGKTLQENQLCVEEAMLKANHNKKQAQTLVFTDNQMDFRVNKQYHLRQLQQLKKKLLTLQQELEFRTQELQASYCSLLQYQSILEKQTSDLLVLHRHCKLKEDEVILYEEEMGNHSKSTGEKLHLAQEQLALAGDKILSLERSLNLYRDKYQTSLSNIELLECQVKMLEGELSGLIGQDPENKGDHPKVRIYTSPCVIQEHQETLKRLSEVWQKVSEQDDLIQELRNKLACSNSLVLEREEALIKLQAEFASYTATHRHPPTSSEDCEDITKILKHLQEQKDSQCLHVEEYQNLVKDLRMELEAVSEQKKKIMKDMMKLELDLHGLREETSCVIEKKDKETVFLQYRLQDLQQQYTESQKLSLKKDKLLQDKDERLHELEKNLMQVQNSLREKEAELEKLQCTTKELDTSLQEARQSTSKIDCEALRAEIQKLKDSLEEAREQLKVSDQNLTQSKEEAHLSASSLEDAHRKIENCLLQDKQKEEVIKDLQSQLHKLQKESSKIEEERKHNRQRLQELSSELSEGQRRLSNAEKEKSLLQKTLDEDEKKIDELFHSTQVSEQKQRELTNSIRKLEEELLEIKGLLEEKREQLKKSKEQEKALEEEIEALRQEAKRKEKMAKEHLRKLDEEKENLQAELTSRSSHLDSSLNKYNSSQKVIQELNAEIARQKDSIMILQTQLDSAIQKEKNCFQNMVSKEAYEELVRKSGNCQDDLTQALEKLTQATSETKSLNRSLQQTQERKAQLEDEIAAYEERMKKLNMELKKLQGFQQQSEQEVHNFDKKLEEMSNQVLQWQRQHQSDLKMLAAKESQLREFQEEMATLRESLLADEKEPYSPPAKLTPKETCRHHRENDQIMNNVEQWAKEQKIANEKLGNKLREQVKYIAKLTGEKDHLHNVMVHLQQENKKLKNEIEEKKLKAGNPRICVKAFPPNKLEPSQKGKLCCALGWRGIPQDLTPKTDHKYMGLPHSSGSSYC</sequence>
<protein>
    <recommendedName>
        <fullName>Polyamine-modulated factor 1-binding protein 1</fullName>
        <shortName>PMF-1-binding protein</shortName>
    </recommendedName>
    <alternativeName>
        <fullName>Sperm tail-associated protein</fullName>
    </alternativeName>
</protein>
<name>PMFBP_MOUSE</name>
<accession>Q9WVQ0</accession>